<gene>
    <name evidence="1" type="primary">arnB</name>
    <name type="ordered locus">KPN78578_38100</name>
    <name type="ORF">KPN_03847</name>
</gene>
<protein>
    <recommendedName>
        <fullName evidence="1">UDP-4-amino-4-deoxy-L-arabinose--oxoglutarate aminotransferase</fullName>
        <ecNumber evidence="1">2.6.1.87</ecNumber>
    </recommendedName>
    <alternativeName>
        <fullName evidence="1">UDP-(beta-L-threo-pentapyranosyl-4''-ulose diphosphate) aminotransferase</fullName>
        <shortName evidence="1">UDP-Ara4O aminotransferase</shortName>
    </alternativeName>
    <alternativeName>
        <fullName evidence="1">UDP-4-amino-4-deoxy-L-arabinose aminotransferase</fullName>
    </alternativeName>
</protein>
<comment type="function">
    <text evidence="1">Catalyzes the conversion of UDP-4-keto-arabinose (UDP-Ara4O) to UDP-4-amino-4-deoxy-L-arabinose (UDP-L-Ara4N). The modified arabinose is attached to lipid A and is required for resistance to polymyxin and cationic antimicrobial peptides.</text>
</comment>
<comment type="catalytic activity">
    <reaction evidence="1">
        <text>UDP-4-amino-4-deoxy-beta-L-arabinose + 2-oxoglutarate = UDP-beta-L-threo-pentopyranos-4-ulose + L-glutamate</text>
        <dbReference type="Rhea" id="RHEA:24710"/>
        <dbReference type="ChEBI" id="CHEBI:16810"/>
        <dbReference type="ChEBI" id="CHEBI:29985"/>
        <dbReference type="ChEBI" id="CHEBI:58708"/>
        <dbReference type="ChEBI" id="CHEBI:58710"/>
        <dbReference type="EC" id="2.6.1.87"/>
    </reaction>
</comment>
<comment type="cofactor">
    <cofactor evidence="1">
        <name>pyridoxal 5'-phosphate</name>
        <dbReference type="ChEBI" id="CHEBI:597326"/>
    </cofactor>
</comment>
<comment type="pathway">
    <text evidence="1">Nucleotide-sugar biosynthesis; UDP-4-deoxy-4-formamido-beta-L-arabinose biosynthesis; UDP-4-deoxy-4-formamido-beta-L-arabinose from UDP-alpha-D-glucuronate: step 2/3.</text>
</comment>
<comment type="pathway">
    <text evidence="1">Bacterial outer membrane biogenesis; lipopolysaccharide biosynthesis.</text>
</comment>
<comment type="subunit">
    <text evidence="1">Homodimer.</text>
</comment>
<comment type="similarity">
    <text evidence="1">Belongs to the DegT/DnrJ/EryC1 family. ArnB subfamily.</text>
</comment>
<comment type="sequence caution" evidence="2">
    <conflict type="erroneous initiation">
        <sequence resource="EMBL-CDS" id="ABR79234"/>
    </conflict>
</comment>
<evidence type="ECO:0000255" key="1">
    <source>
        <dbReference type="HAMAP-Rule" id="MF_01167"/>
    </source>
</evidence>
<evidence type="ECO:0000305" key="2"/>
<organism>
    <name type="scientific">Klebsiella pneumoniae subsp. pneumoniae (strain ATCC 700721 / MGH 78578)</name>
    <dbReference type="NCBI Taxonomy" id="272620"/>
    <lineage>
        <taxon>Bacteria</taxon>
        <taxon>Pseudomonadati</taxon>
        <taxon>Pseudomonadota</taxon>
        <taxon>Gammaproteobacteria</taxon>
        <taxon>Enterobacterales</taxon>
        <taxon>Enterobacteriaceae</taxon>
        <taxon>Klebsiella/Raoultella group</taxon>
        <taxon>Klebsiella</taxon>
        <taxon>Klebsiella pneumoniae complex</taxon>
    </lineage>
</organism>
<proteinExistence type="inferred from homology"/>
<sequence length="379" mass="41320">MSDFLPFSRPSMGDAELAALREVLASGWITTGPKNQALEAAFCQLTGNRHAIAVSSATGGMHVTLMALGIGPGDEVITPSQTWVSTLNMICLLGATPVMIDVDNDNLMITPDAVEAAITSRTKAIIPVHYAGAPADIDAIRAVGERHGISVIEDAAHAAGTHYKGRHVGWQGTAIFSFHAIKNMTCAEGGLIVTDDDELASRIRSLKFHGLGVDAYDRQTHGRAPQAEVITPGFKYNLADINAALALVQLEKLSHANQRRTEIAQRYLRELADTPFKPLSVPTWDHQHAWHLFIIRVDEAACGISRDALMEKLKAMGIGTGLHFRAAHTQKYYRERFPEVSLPNTEWNSARICSLPLFPDMTDDDVTRVISALRQLSGR</sequence>
<dbReference type="EC" id="2.6.1.87" evidence="1"/>
<dbReference type="EMBL" id="CP000647">
    <property type="protein sequence ID" value="ABR79234.1"/>
    <property type="status" value="ALT_INIT"/>
    <property type="molecule type" value="Genomic_DNA"/>
</dbReference>
<dbReference type="RefSeq" id="WP_004889389.1">
    <property type="nucleotide sequence ID" value="NC_009648.1"/>
</dbReference>
<dbReference type="SMR" id="A6TFA0"/>
<dbReference type="STRING" id="272620.KPN_03847"/>
<dbReference type="jPOST" id="A6TFA0"/>
<dbReference type="PaxDb" id="272620-KPN_03847"/>
<dbReference type="EnsemblBacteria" id="ABR79234">
    <property type="protein sequence ID" value="ABR79234"/>
    <property type="gene ID" value="KPN_03847"/>
</dbReference>
<dbReference type="KEGG" id="kpn:KPN_03847"/>
<dbReference type="HOGENOM" id="CLU_033332_0_3_6"/>
<dbReference type="UniPathway" id="UPA00030"/>
<dbReference type="UniPathway" id="UPA00032">
    <property type="reaction ID" value="UER00493"/>
</dbReference>
<dbReference type="PHI-base" id="PHI:7949"/>
<dbReference type="Proteomes" id="UP000000265">
    <property type="component" value="Chromosome"/>
</dbReference>
<dbReference type="GO" id="GO:0016020">
    <property type="term" value="C:membrane"/>
    <property type="evidence" value="ECO:0007669"/>
    <property type="project" value="GOC"/>
</dbReference>
<dbReference type="GO" id="GO:0030170">
    <property type="term" value="F:pyridoxal phosphate binding"/>
    <property type="evidence" value="ECO:0007669"/>
    <property type="project" value="TreeGrafter"/>
</dbReference>
<dbReference type="GO" id="GO:0099620">
    <property type="term" value="F:UDP-4-amino-4-deoxy-L-arabinose aminotransferase"/>
    <property type="evidence" value="ECO:0007669"/>
    <property type="project" value="UniProtKB-EC"/>
</dbReference>
<dbReference type="GO" id="GO:0009245">
    <property type="term" value="P:lipid A biosynthetic process"/>
    <property type="evidence" value="ECO:0007669"/>
    <property type="project" value="UniProtKB-KW"/>
</dbReference>
<dbReference type="GO" id="GO:0009103">
    <property type="term" value="P:lipopolysaccharide biosynthetic process"/>
    <property type="evidence" value="ECO:0007669"/>
    <property type="project" value="UniProtKB-UniRule"/>
</dbReference>
<dbReference type="GO" id="GO:0046677">
    <property type="term" value="P:response to antibiotic"/>
    <property type="evidence" value="ECO:0007669"/>
    <property type="project" value="UniProtKB-KW"/>
</dbReference>
<dbReference type="CDD" id="cd00616">
    <property type="entry name" value="AHBA_syn"/>
    <property type="match status" value="1"/>
</dbReference>
<dbReference type="FunFam" id="3.40.640.10:FF:000040">
    <property type="entry name" value="UDP-4-amino-4-deoxy-L-arabinose--oxoglutarate aminotransferase"/>
    <property type="match status" value="1"/>
</dbReference>
<dbReference type="FunFam" id="3.90.1150.10:FF:000030">
    <property type="entry name" value="UDP-4-amino-4-deoxy-L-arabinose--oxoglutarate aminotransferase"/>
    <property type="match status" value="1"/>
</dbReference>
<dbReference type="Gene3D" id="3.90.1150.10">
    <property type="entry name" value="Aspartate Aminotransferase, domain 1"/>
    <property type="match status" value="1"/>
</dbReference>
<dbReference type="Gene3D" id="3.40.640.10">
    <property type="entry name" value="Type I PLP-dependent aspartate aminotransferase-like (Major domain)"/>
    <property type="match status" value="1"/>
</dbReference>
<dbReference type="HAMAP" id="MF_01167">
    <property type="entry name" value="ArnB_transfer"/>
    <property type="match status" value="1"/>
</dbReference>
<dbReference type="InterPro" id="IPR022850">
    <property type="entry name" value="ArnB_NH2Trfase"/>
</dbReference>
<dbReference type="InterPro" id="IPR000653">
    <property type="entry name" value="DegT/StrS_aminotransferase"/>
</dbReference>
<dbReference type="InterPro" id="IPR015424">
    <property type="entry name" value="PyrdxlP-dep_Trfase"/>
</dbReference>
<dbReference type="InterPro" id="IPR015421">
    <property type="entry name" value="PyrdxlP-dep_Trfase_major"/>
</dbReference>
<dbReference type="InterPro" id="IPR015422">
    <property type="entry name" value="PyrdxlP-dep_Trfase_small"/>
</dbReference>
<dbReference type="NCBIfam" id="NF008658">
    <property type="entry name" value="PRK11658.1"/>
    <property type="match status" value="1"/>
</dbReference>
<dbReference type="PANTHER" id="PTHR30244">
    <property type="entry name" value="TRANSAMINASE"/>
    <property type="match status" value="1"/>
</dbReference>
<dbReference type="PANTHER" id="PTHR30244:SF41">
    <property type="entry name" value="UDP-4-AMINO-4-DEOXY-L-ARABINOSE--OXOGLUTARATE AMINOTRANSFERASE"/>
    <property type="match status" value="1"/>
</dbReference>
<dbReference type="Pfam" id="PF01041">
    <property type="entry name" value="DegT_DnrJ_EryC1"/>
    <property type="match status" value="1"/>
</dbReference>
<dbReference type="PIRSF" id="PIRSF000390">
    <property type="entry name" value="PLP_StrS"/>
    <property type="match status" value="1"/>
</dbReference>
<dbReference type="SUPFAM" id="SSF53383">
    <property type="entry name" value="PLP-dependent transferases"/>
    <property type="match status" value="1"/>
</dbReference>
<reference key="1">
    <citation type="submission" date="2006-09" db="EMBL/GenBank/DDBJ databases">
        <authorList>
            <consortium name="The Klebsiella pneumonia Genome Sequencing Project"/>
            <person name="McClelland M."/>
            <person name="Sanderson E.K."/>
            <person name="Spieth J."/>
            <person name="Clifton W.S."/>
            <person name="Latreille P."/>
            <person name="Sabo A."/>
            <person name="Pepin K."/>
            <person name="Bhonagiri V."/>
            <person name="Porwollik S."/>
            <person name="Ali J."/>
            <person name="Wilson R.K."/>
        </authorList>
    </citation>
    <scope>NUCLEOTIDE SEQUENCE [LARGE SCALE GENOMIC DNA]</scope>
    <source>
        <strain>ATCC 700721 / MGH 78578</strain>
    </source>
</reference>
<accession>A6TFA0</accession>
<feature type="chain" id="PRO_0000380535" description="UDP-4-amino-4-deoxy-L-arabinose--oxoglutarate aminotransferase">
    <location>
        <begin position="1"/>
        <end position="379"/>
    </location>
</feature>
<feature type="modified residue" description="N6-(pyridoxal phosphate)lysine" evidence="1">
    <location>
        <position position="182"/>
    </location>
</feature>
<keyword id="KW-0032">Aminotransferase</keyword>
<keyword id="KW-0046">Antibiotic resistance</keyword>
<keyword id="KW-0441">Lipid A biosynthesis</keyword>
<keyword id="KW-0444">Lipid biosynthesis</keyword>
<keyword id="KW-0443">Lipid metabolism</keyword>
<keyword id="KW-0448">Lipopolysaccharide biosynthesis</keyword>
<keyword id="KW-0663">Pyridoxal phosphate</keyword>
<keyword id="KW-0808">Transferase</keyword>
<name>ARNB_KLEP7</name>